<accession>P58766</accession>
<organism>
    <name type="scientific">Arabidopsis thaliana</name>
    <name type="common">Mouse-ear cress</name>
    <dbReference type="NCBI Taxonomy" id="3702"/>
    <lineage>
        <taxon>Eukaryota</taxon>
        <taxon>Viridiplantae</taxon>
        <taxon>Streptophyta</taxon>
        <taxon>Embryophyta</taxon>
        <taxon>Tracheophyta</taxon>
        <taxon>Spermatophyta</taxon>
        <taxon>Magnoliopsida</taxon>
        <taxon>eudicotyledons</taxon>
        <taxon>Gunneridae</taxon>
        <taxon>Pentapetalae</taxon>
        <taxon>rosids</taxon>
        <taxon>malvids</taxon>
        <taxon>Brassicales</taxon>
        <taxon>Brassicaceae</taxon>
        <taxon>Camelineae</taxon>
        <taxon>Arabidopsis</taxon>
    </lineage>
</organism>
<protein>
    <recommendedName>
        <fullName evidence="7">Phospholipase D alpha 3</fullName>
        <shortName evidence="7">AtPLDalpha3</shortName>
        <shortName evidence="7">PLD alpha 3</shortName>
        <ecNumber evidence="1">3.1.4.4</ecNumber>
    </recommendedName>
</protein>
<proteinExistence type="evidence at transcript level"/>
<keyword id="KW-0106">Calcium</keyword>
<keyword id="KW-0963">Cytoplasm</keyword>
<keyword id="KW-0378">Hydrolase</keyword>
<keyword id="KW-0442">Lipid degradation</keyword>
<keyword id="KW-0443">Lipid metabolism</keyword>
<keyword id="KW-0472">Membrane</keyword>
<keyword id="KW-0479">Metal-binding</keyword>
<keyword id="KW-1185">Reference proteome</keyword>
<keyword id="KW-0677">Repeat</keyword>
<sequence length="820" mass="93362">MTEQLLLHGTLEVKIYRIDKLHQRSRFNLCGKGNKEPTGKKTQSQIKRLTDSCTSLFGGHLYATIDLDRSRVARTMMRRHPKWLQSFHVYTAHSISKIIFTVKEDEPVSASLIGRAYLPVTEVITGQPIDRWLDILDENRRPIQGGSKLHVRVKFTHVTQDVNWNKGIILPSFNGVPNAYFNQREGCKVTLYQDAHVLNEYPDVTLTGGQVIYKHHRCWEEIFDAIWEAKHLIYIAGWSVNTDVTLVRDPKRTRPGGDLKLGELLKKKAEENVTVLMLVWDDRTSHEVFKRDGLMMTHDQETYDYFKNTKVRCVLCPRNPDNGDSIVQGFEVATMFTHHQKTIVVDSEVDGSLTKRRIVSFLGGIDLCDGRYDTVEHPLFGTLNSVHANDFHQPNFDGASIKKGGPREPWHDIHCKLDGPAAWDVLYNFEQRWMKQGSGRRYLISMAQLAEITVPPLPIVQPDNEEGWTVQVFRSIDDGAVEGFPEDPREAASIGLISGKDNVIERSIQDAYVNAIRRAKNFIYIENQYFLGSSFGWNSRDINLNEINALQLIPKEISLKIVSKIEAGERFSVYIVIPLWPEGKPGSASVQAILDWQRRTMEMMYTDIIIALRKKGLDANPRDYLTFFCLGNREKGKVGEYLPPEKPEANSDYARAQESRRFMIYVHSKMMIVDDEYIIIGSANINQRSMDGGRDTEIAMGAYQPSHLLSTNNMRPVGQIFSFRISLWLEHLRVTTNAFQCPESEECIRMVNATADELWGLYSAQEYPRNDDLPGHLLSYPISIGSNGEVTNLAGTEFFPDTNAKVVGEKSNYLPPILTS</sequence>
<dbReference type="EC" id="3.1.4.4" evidence="1"/>
<dbReference type="EMBL" id="AC006258">
    <property type="status" value="NOT_ANNOTATED_CDS"/>
    <property type="molecule type" value="Genomic_DNA"/>
</dbReference>
<dbReference type="EMBL" id="CP002688">
    <property type="protein sequence ID" value="AED93432.1"/>
    <property type="molecule type" value="Genomic_DNA"/>
</dbReference>
<dbReference type="EMBL" id="CP002688">
    <property type="protein sequence ID" value="ANM70004.1"/>
    <property type="molecule type" value="Genomic_DNA"/>
</dbReference>
<dbReference type="EMBL" id="CP002688">
    <property type="protein sequence ID" value="ANM70005.1"/>
    <property type="molecule type" value="Genomic_DNA"/>
</dbReference>
<dbReference type="RefSeq" id="NP_001318645.1">
    <property type="nucleotide sequence ID" value="NM_001343920.1"/>
</dbReference>
<dbReference type="RefSeq" id="NP_001331647.1">
    <property type="nucleotide sequence ID" value="NM_001343921.1"/>
</dbReference>
<dbReference type="RefSeq" id="NP_197919.1">
    <property type="nucleotide sequence ID" value="NM_122446.2"/>
</dbReference>
<dbReference type="SMR" id="P58766"/>
<dbReference type="FunCoup" id="P58766">
    <property type="interactions" value="156"/>
</dbReference>
<dbReference type="STRING" id="3702.P58766"/>
<dbReference type="PaxDb" id="3702-AT5G25370.1"/>
<dbReference type="ProteomicsDB" id="226199"/>
<dbReference type="EnsemblPlants" id="AT5G25370.1">
    <property type="protein sequence ID" value="AT5G25370.1"/>
    <property type="gene ID" value="AT5G25370"/>
</dbReference>
<dbReference type="EnsemblPlants" id="AT5G25370.2">
    <property type="protein sequence ID" value="AT5G25370.2"/>
    <property type="gene ID" value="AT5G25370"/>
</dbReference>
<dbReference type="EnsemblPlants" id="AT5G25370.3">
    <property type="protein sequence ID" value="AT5G25370.3"/>
    <property type="gene ID" value="AT5G25370"/>
</dbReference>
<dbReference type="GeneID" id="832609"/>
<dbReference type="Gramene" id="AT5G25370.1">
    <property type="protein sequence ID" value="AT5G25370.1"/>
    <property type="gene ID" value="AT5G25370"/>
</dbReference>
<dbReference type="Gramene" id="AT5G25370.2">
    <property type="protein sequence ID" value="AT5G25370.2"/>
    <property type="gene ID" value="AT5G25370"/>
</dbReference>
<dbReference type="Gramene" id="AT5G25370.3">
    <property type="protein sequence ID" value="AT5G25370.3"/>
    <property type="gene ID" value="AT5G25370"/>
</dbReference>
<dbReference type="KEGG" id="ath:AT5G25370"/>
<dbReference type="Araport" id="AT5G25370"/>
<dbReference type="TAIR" id="AT5G25370">
    <property type="gene designation" value="PLDALPHA3"/>
</dbReference>
<dbReference type="eggNOG" id="KOG1329">
    <property type="taxonomic scope" value="Eukaryota"/>
</dbReference>
<dbReference type="HOGENOM" id="CLU_004684_0_0_1"/>
<dbReference type="InParanoid" id="P58766"/>
<dbReference type="PhylomeDB" id="P58766"/>
<dbReference type="BioCyc" id="ARA:AT5G25370-MONOMER"/>
<dbReference type="PRO" id="PR:P58766"/>
<dbReference type="Proteomes" id="UP000006548">
    <property type="component" value="Chromosome 5"/>
</dbReference>
<dbReference type="ExpressionAtlas" id="P58766">
    <property type="expression patterns" value="baseline and differential"/>
</dbReference>
<dbReference type="GO" id="GO:0005737">
    <property type="term" value="C:cytoplasm"/>
    <property type="evidence" value="ECO:0007669"/>
    <property type="project" value="UniProtKB-SubCell"/>
</dbReference>
<dbReference type="GO" id="GO:0016020">
    <property type="term" value="C:membrane"/>
    <property type="evidence" value="ECO:0007669"/>
    <property type="project" value="UniProtKB-SubCell"/>
</dbReference>
<dbReference type="GO" id="GO:0005509">
    <property type="term" value="F:calcium ion binding"/>
    <property type="evidence" value="ECO:0007669"/>
    <property type="project" value="InterPro"/>
</dbReference>
<dbReference type="GO" id="GO:0004630">
    <property type="term" value="F:phospholipase D activity"/>
    <property type="evidence" value="ECO:0000314"/>
    <property type="project" value="TAIR"/>
</dbReference>
<dbReference type="GO" id="GO:0046466">
    <property type="term" value="P:membrane lipid catabolic process"/>
    <property type="evidence" value="ECO:0000315"/>
    <property type="project" value="TAIR"/>
</dbReference>
<dbReference type="GO" id="GO:0046470">
    <property type="term" value="P:phosphatidylcholine metabolic process"/>
    <property type="evidence" value="ECO:0007669"/>
    <property type="project" value="InterPro"/>
</dbReference>
<dbReference type="GO" id="GO:0009737">
    <property type="term" value="P:response to abscisic acid"/>
    <property type="evidence" value="ECO:0000315"/>
    <property type="project" value="TAIR"/>
</dbReference>
<dbReference type="GO" id="GO:0009651">
    <property type="term" value="P:response to salt stress"/>
    <property type="evidence" value="ECO:0000315"/>
    <property type="project" value="TAIR"/>
</dbReference>
<dbReference type="GO" id="GO:0009414">
    <property type="term" value="P:response to water deprivation"/>
    <property type="evidence" value="ECO:0000315"/>
    <property type="project" value="TAIR"/>
</dbReference>
<dbReference type="CDD" id="cd04015">
    <property type="entry name" value="C2_plant_PLD"/>
    <property type="match status" value="1"/>
</dbReference>
<dbReference type="FunFam" id="3.30.870.10:FF:000027">
    <property type="entry name" value="Phospholipase D"/>
    <property type="match status" value="1"/>
</dbReference>
<dbReference type="FunFam" id="3.30.870.10:FF:000025">
    <property type="entry name" value="Phospholipase D delta"/>
    <property type="match status" value="1"/>
</dbReference>
<dbReference type="Gene3D" id="2.60.40.150">
    <property type="entry name" value="C2 domain"/>
    <property type="match status" value="1"/>
</dbReference>
<dbReference type="Gene3D" id="3.30.870.10">
    <property type="entry name" value="Endonuclease Chain A"/>
    <property type="match status" value="2"/>
</dbReference>
<dbReference type="InterPro" id="IPR000008">
    <property type="entry name" value="C2_dom"/>
</dbReference>
<dbReference type="InterPro" id="IPR035892">
    <property type="entry name" value="C2_domain_sf"/>
</dbReference>
<dbReference type="InterPro" id="IPR001736">
    <property type="entry name" value="PLipase_D/transphosphatidylase"/>
</dbReference>
<dbReference type="InterPro" id="IPR024632">
    <property type="entry name" value="PLipase_D_C"/>
</dbReference>
<dbReference type="InterPro" id="IPR015679">
    <property type="entry name" value="PLipase_D_fam"/>
</dbReference>
<dbReference type="InterPro" id="IPR011402">
    <property type="entry name" value="PLipase_D_pln"/>
</dbReference>
<dbReference type="PANTHER" id="PTHR18896">
    <property type="entry name" value="PHOSPHOLIPASE D"/>
    <property type="match status" value="1"/>
</dbReference>
<dbReference type="PANTHER" id="PTHR18896:SF202">
    <property type="entry name" value="PHOSPHOLIPASE D ALPHA 3"/>
    <property type="match status" value="1"/>
</dbReference>
<dbReference type="Pfam" id="PF00168">
    <property type="entry name" value="C2"/>
    <property type="match status" value="1"/>
</dbReference>
<dbReference type="Pfam" id="PF12357">
    <property type="entry name" value="PLD_C"/>
    <property type="match status" value="1"/>
</dbReference>
<dbReference type="Pfam" id="PF00614">
    <property type="entry name" value="PLDc"/>
    <property type="match status" value="2"/>
</dbReference>
<dbReference type="PIRSF" id="PIRSF036470">
    <property type="entry name" value="PLD_plant"/>
    <property type="match status" value="1"/>
</dbReference>
<dbReference type="SMART" id="SM00239">
    <property type="entry name" value="C2"/>
    <property type="match status" value="1"/>
</dbReference>
<dbReference type="SMART" id="SM00155">
    <property type="entry name" value="PLDc"/>
    <property type="match status" value="2"/>
</dbReference>
<dbReference type="SUPFAM" id="SSF49562">
    <property type="entry name" value="C2 domain (Calcium/lipid-binding domain, CaLB)"/>
    <property type="match status" value="1"/>
</dbReference>
<dbReference type="SUPFAM" id="SSF56024">
    <property type="entry name" value="Phospholipase D/nuclease"/>
    <property type="match status" value="2"/>
</dbReference>
<dbReference type="PROSITE" id="PS50004">
    <property type="entry name" value="C2"/>
    <property type="match status" value="1"/>
</dbReference>
<dbReference type="PROSITE" id="PS50035">
    <property type="entry name" value="PLD"/>
    <property type="match status" value="2"/>
</dbReference>
<reference key="1">
    <citation type="journal article" date="2000" name="Nature">
        <title>Sequence and analysis of chromosome 5 of the plant Arabidopsis thaliana.</title>
        <authorList>
            <person name="Tabata S."/>
            <person name="Kaneko T."/>
            <person name="Nakamura Y."/>
            <person name="Kotani H."/>
            <person name="Kato T."/>
            <person name="Asamizu E."/>
            <person name="Miyajima N."/>
            <person name="Sasamoto S."/>
            <person name="Kimura T."/>
            <person name="Hosouchi T."/>
            <person name="Kawashima K."/>
            <person name="Kohara M."/>
            <person name="Matsumoto M."/>
            <person name="Matsuno A."/>
            <person name="Muraki A."/>
            <person name="Nakayama S."/>
            <person name="Nakazaki N."/>
            <person name="Naruo K."/>
            <person name="Okumura S."/>
            <person name="Shinpo S."/>
            <person name="Takeuchi C."/>
            <person name="Wada T."/>
            <person name="Watanabe A."/>
            <person name="Yamada M."/>
            <person name="Yasuda M."/>
            <person name="Sato S."/>
            <person name="de la Bastide M."/>
            <person name="Huang E."/>
            <person name="Spiegel L."/>
            <person name="Gnoj L."/>
            <person name="O'Shaughnessy A."/>
            <person name="Preston R."/>
            <person name="Habermann K."/>
            <person name="Murray J."/>
            <person name="Johnson D."/>
            <person name="Rohlfing T."/>
            <person name="Nelson J."/>
            <person name="Stoneking T."/>
            <person name="Pepin K."/>
            <person name="Spieth J."/>
            <person name="Sekhon M."/>
            <person name="Armstrong J."/>
            <person name="Becker M."/>
            <person name="Belter E."/>
            <person name="Cordum H."/>
            <person name="Cordes M."/>
            <person name="Courtney L."/>
            <person name="Courtney W."/>
            <person name="Dante M."/>
            <person name="Du H."/>
            <person name="Edwards J."/>
            <person name="Fryman J."/>
            <person name="Haakensen B."/>
            <person name="Lamar E."/>
            <person name="Latreille P."/>
            <person name="Leonard S."/>
            <person name="Meyer R."/>
            <person name="Mulvaney E."/>
            <person name="Ozersky P."/>
            <person name="Riley A."/>
            <person name="Strowmatt C."/>
            <person name="Wagner-McPherson C."/>
            <person name="Wollam A."/>
            <person name="Yoakum M."/>
            <person name="Bell M."/>
            <person name="Dedhia N."/>
            <person name="Parnell L."/>
            <person name="Shah R."/>
            <person name="Rodriguez M."/>
            <person name="Hoon See L."/>
            <person name="Vil D."/>
            <person name="Baker J."/>
            <person name="Kirchoff K."/>
            <person name="Toth K."/>
            <person name="King L."/>
            <person name="Bahret A."/>
            <person name="Miller B."/>
            <person name="Marra M.A."/>
            <person name="Martienssen R."/>
            <person name="McCombie W.R."/>
            <person name="Wilson R.K."/>
            <person name="Murphy G."/>
            <person name="Bancroft I."/>
            <person name="Volckaert G."/>
            <person name="Wambutt R."/>
            <person name="Duesterhoeft A."/>
            <person name="Stiekema W."/>
            <person name="Pohl T."/>
            <person name="Entian K.-D."/>
            <person name="Terryn N."/>
            <person name="Hartley N."/>
            <person name="Bent E."/>
            <person name="Johnson S."/>
            <person name="Langham S.-A."/>
            <person name="McCullagh B."/>
            <person name="Robben J."/>
            <person name="Grymonprez B."/>
            <person name="Zimmermann W."/>
            <person name="Ramsperger U."/>
            <person name="Wedler H."/>
            <person name="Balke K."/>
            <person name="Wedler E."/>
            <person name="Peters S."/>
            <person name="van Staveren M."/>
            <person name="Dirkse W."/>
            <person name="Mooijman P."/>
            <person name="Klein Lankhorst R."/>
            <person name="Weitzenegger T."/>
            <person name="Bothe G."/>
            <person name="Rose M."/>
            <person name="Hauf J."/>
            <person name="Berneiser S."/>
            <person name="Hempel S."/>
            <person name="Feldpausch M."/>
            <person name="Lamberth S."/>
            <person name="Villarroel R."/>
            <person name="Gielen J."/>
            <person name="Ardiles W."/>
            <person name="Bents O."/>
            <person name="Lemcke K."/>
            <person name="Kolesov G."/>
            <person name="Mayer K.F.X."/>
            <person name="Rudd S."/>
            <person name="Schoof H."/>
            <person name="Schueller C."/>
            <person name="Zaccaria P."/>
            <person name="Mewes H.-W."/>
            <person name="Bevan M."/>
            <person name="Fransz P.F."/>
        </authorList>
    </citation>
    <scope>NUCLEOTIDE SEQUENCE [LARGE SCALE GENOMIC DNA]</scope>
    <source>
        <strain>cv. Columbia</strain>
    </source>
</reference>
<reference key="2">
    <citation type="journal article" date="2017" name="Plant J.">
        <title>Araport11: a complete reannotation of the Arabidopsis thaliana reference genome.</title>
        <authorList>
            <person name="Cheng C.Y."/>
            <person name="Krishnakumar V."/>
            <person name="Chan A.P."/>
            <person name="Thibaud-Nissen F."/>
            <person name="Schobel S."/>
            <person name="Town C.D."/>
        </authorList>
    </citation>
    <scope>GENOME REANNOTATION</scope>
    <source>
        <strain>cv. Columbia</strain>
    </source>
</reference>
<reference key="3">
    <citation type="journal article" date="2002" name="Plant Physiol.">
        <title>The Arabidopsis phospholipase D family. Characterization of a calcium-independent and phosphatidylcholine-selective PLD zeta 1 with distinct regulatory domains.</title>
        <authorList>
            <person name="Qin C."/>
            <person name="Wang X."/>
        </authorList>
    </citation>
    <scope>GENE FAMILY</scope>
    <scope>NOMENCLATURE</scope>
</reference>
<reference key="4">
    <citation type="journal article" date="2008" name="Plant Cell">
        <title>Phospholipase Dalpha3 is involved in the hyperosmotic response in Arabidopsis.</title>
        <authorList>
            <person name="Hong Y."/>
            <person name="Pan X."/>
            <person name="Welti R."/>
            <person name="Wang X."/>
        </authorList>
    </citation>
    <scope>FUNCTION</scope>
    <scope>DISRUPTION PHENOTYPE</scope>
    <scope>TISSUE SPECIFICITY</scope>
</reference>
<reference key="5">
    <citation type="journal article" date="2008" name="Plant Signal. Behav.">
        <title>The effect of phospholipase Dalpha3 on Arabidopsis response to hyperosmotic stress and glucose.</title>
        <authorList>
            <person name="Hong Y."/>
            <person name="Pan X."/>
            <person name="Welti R."/>
            <person name="Wang X."/>
        </authorList>
    </citation>
    <scope>FUNCTION</scope>
    <scope>DISRUPTION PHENOTYPE</scope>
</reference>
<reference key="6">
    <citation type="journal article" date="2014" name="Science">
        <title>Plant development. Arabidopsis NAC45/86 direct sieve element morphogenesis culminating in enucleation.</title>
        <authorList>
            <person name="Furuta K.M."/>
            <person name="Yadav S.R."/>
            <person name="Lehesranta S."/>
            <person name="Belevich I."/>
            <person name="Miyashima S."/>
            <person name="Heo J.O."/>
            <person name="Vaten A."/>
            <person name="Lindgren O."/>
            <person name="De Rybel B."/>
            <person name="Van Isterdael G."/>
            <person name="Somervuo P."/>
            <person name="Lichtenberger R."/>
            <person name="Rocha R."/>
            <person name="Thitamadee S."/>
            <person name="Taehtiharju S."/>
            <person name="Auvinen P."/>
            <person name="Beeckman T."/>
            <person name="Jokitalo E."/>
            <person name="Helariutta Y."/>
        </authorList>
    </citation>
    <scope>INDUCTION BY NAC045 AND NAC086</scope>
    <scope>TISSUE SPECIFICITY</scope>
</reference>
<feature type="chain" id="PRO_0000218817" description="Phospholipase D alpha 3">
    <location>
        <begin position="1"/>
        <end position="820"/>
    </location>
</feature>
<feature type="domain" description="C2" evidence="2">
    <location>
        <begin position="1"/>
        <end position="133"/>
    </location>
</feature>
<feature type="domain" description="PLD phosphodiesterase 1" evidence="3">
    <location>
        <begin position="334"/>
        <end position="371"/>
    </location>
</feature>
<feature type="domain" description="PLD phosphodiesterase 2" evidence="3">
    <location>
        <begin position="662"/>
        <end position="689"/>
    </location>
</feature>
<feature type="active site" evidence="3">
    <location>
        <position position="339"/>
    </location>
</feature>
<feature type="active site" evidence="3">
    <location>
        <position position="341"/>
    </location>
</feature>
<feature type="active site" evidence="3">
    <location>
        <position position="346"/>
    </location>
</feature>
<feature type="active site" evidence="3">
    <location>
        <position position="667"/>
    </location>
</feature>
<feature type="active site" evidence="3">
    <location>
        <position position="669"/>
    </location>
</feature>
<feature type="active site" evidence="3">
    <location>
        <position position="674"/>
    </location>
</feature>
<feature type="binding site" evidence="1">
    <location>
        <position position="194"/>
    </location>
    <ligand>
        <name>Ca(2+)</name>
        <dbReference type="ChEBI" id="CHEBI:29108"/>
    </ligand>
</feature>
<feature type="binding site" evidence="1">
    <location>
        <position position="339"/>
    </location>
    <ligand>
        <name>a 1,2-diacyl-sn-glycero-3-phosphate</name>
        <dbReference type="ChEBI" id="CHEBI:58608"/>
    </ligand>
</feature>
<feature type="binding site" evidence="1">
    <location>
        <position position="377"/>
    </location>
    <ligand>
        <name>Ca(2+)</name>
        <dbReference type="ChEBI" id="CHEBI:29108"/>
    </ligand>
</feature>
<feature type="binding site" evidence="1">
    <location>
        <position position="411"/>
    </location>
    <ligand>
        <name>Ca(2+)</name>
        <dbReference type="ChEBI" id="CHEBI:29108"/>
    </ligand>
</feature>
<feature type="binding site" evidence="1">
    <location>
        <position position="528"/>
    </location>
    <ligand>
        <name>a 1,2-diacyl-sn-glycero-3-phosphate</name>
        <dbReference type="ChEBI" id="CHEBI:58608"/>
    </ligand>
</feature>
<feature type="binding site" evidence="1">
    <location>
        <position position="667"/>
    </location>
    <ligand>
        <name>a 1,2-diacyl-sn-glycero-3-phosphate</name>
        <dbReference type="ChEBI" id="CHEBI:58608"/>
    </ligand>
</feature>
<feature type="binding site" evidence="1">
    <location>
        <position position="730"/>
    </location>
    <ligand>
        <name>Ca(2+)</name>
        <dbReference type="ChEBI" id="CHEBI:29108"/>
    </ligand>
</feature>
<gene>
    <name evidence="7" type="primary">PLDALPHA3</name>
    <name evidence="9" type="ordered locus">At5g25370</name>
    <name type="ORF">F18G18.110</name>
</gene>
<name>PLDA3_ARATH</name>
<evidence type="ECO:0000250" key="1">
    <source>
        <dbReference type="UniProtKB" id="Q38882"/>
    </source>
</evidence>
<evidence type="ECO:0000255" key="2">
    <source>
        <dbReference type="PROSITE-ProRule" id="PRU00041"/>
    </source>
</evidence>
<evidence type="ECO:0000255" key="3">
    <source>
        <dbReference type="PROSITE-ProRule" id="PRU00153"/>
    </source>
</evidence>
<evidence type="ECO:0000269" key="4">
    <source>
    </source>
</evidence>
<evidence type="ECO:0000269" key="5">
    <source>
    </source>
</evidence>
<evidence type="ECO:0000269" key="6">
    <source>
    </source>
</evidence>
<evidence type="ECO:0000303" key="7">
    <source>
    </source>
</evidence>
<evidence type="ECO:0000305" key="8"/>
<evidence type="ECO:0000312" key="9">
    <source>
        <dbReference type="Araport" id="AT5G25370"/>
    </source>
</evidence>
<comment type="function">
    <text evidence="4 5">Hydrolyzes glycerol-phospholipids at the terminal phosphodiesteric bond to generate phosphatidic acids (PA) (PubMed:18364466). Active with phosphatidylcholine (PC), phosphatidylethanolamine (PE), phosphatidylglycerol (PG), and phosphatidylserine (PS) as substrates (PubMed:18364466). No activity toward phosphatidylinositol (PI) or PIP2 (PubMed:18364466). Positively mediates plant responses to hyperosmotic stresses and promotes root growth, flowering, and stress avoidance (PubMed:18364466, PubMed:19704505). Not involved in the abscisic acid regulation of stomatal movement and transpirational water loss (PubMed:18364466).</text>
</comment>
<comment type="catalytic activity">
    <reaction evidence="1">
        <text>a 1,2-diacyl-sn-glycero-3-phosphocholine + H2O = a 1,2-diacyl-sn-glycero-3-phosphate + choline + H(+)</text>
        <dbReference type="Rhea" id="RHEA:14445"/>
        <dbReference type="ChEBI" id="CHEBI:15354"/>
        <dbReference type="ChEBI" id="CHEBI:15377"/>
        <dbReference type="ChEBI" id="CHEBI:15378"/>
        <dbReference type="ChEBI" id="CHEBI:57643"/>
        <dbReference type="ChEBI" id="CHEBI:58608"/>
        <dbReference type="EC" id="3.1.4.4"/>
    </reaction>
</comment>
<comment type="cofactor">
    <cofactor evidence="1">
        <name>Ca(2+)</name>
        <dbReference type="ChEBI" id="CHEBI:29108"/>
    </cofactor>
</comment>
<comment type="subcellular location">
    <subcellularLocation>
        <location evidence="1">Cytoplasm</location>
    </subcellularLocation>
    <subcellularLocation>
        <location evidence="1">Membrane</location>
        <topology evidence="1">Peripheral membrane protein</topology>
    </subcellularLocation>
</comment>
<comment type="tissue specificity">
    <text evidence="4 6">Expressed in buds, flowers, siliques, stems, old leaves and roots (PubMed:18364466). Expressed in the sieve elements (PubMed:25081480).</text>
</comment>
<comment type="induction">
    <text evidence="6">Regulated by the transcription factors NAC045 and NAC086.</text>
</comment>
<comment type="domain">
    <text evidence="8">C2 domain is a calcium-binding fold, and the binding promotes the protein association with membranes. A lower affinity toward calcium can be anticipated for PLD alpha due to the absence of two potential calcium ligands.</text>
</comment>
<comment type="disruption phenotype">
    <text evidence="4 5">No visible phenotypes when grown under normal conditions, but increased sensitivity to salinity and water deficiency (PubMed:18364466). Late flowering in slightly dry conditions (PubMed:18364466). Decreased sensitivity to glucose (PubMed:19704505).</text>
</comment>
<comment type="similarity">
    <text evidence="8">Belongs to the phospholipase D family. C2-PLD subfamily.</text>
</comment>